<accession>Q32PV5</accession>
<sequence length="176" mass="19346">MSTGSISDVDEFHESELLDGLPKFGSGKDPGTSNESTEDSSNCEGASVSECTGKRRKSANMRRSAPNGVAQEGKQVQRNAANARERARMRVLSKAFSRLKTTLPWVPPDTKLSKLDTLRLASSYIAHLRQILANDKYENGYIHPVNLTWPFMVAGKPENELKEMLNSTRLCGTTAS</sequence>
<organism>
    <name type="scientific">Danio rerio</name>
    <name type="common">Zebrafish</name>
    <name type="synonym">Brachydanio rerio</name>
    <dbReference type="NCBI Taxonomy" id="7955"/>
    <lineage>
        <taxon>Eukaryota</taxon>
        <taxon>Metazoa</taxon>
        <taxon>Chordata</taxon>
        <taxon>Craniata</taxon>
        <taxon>Vertebrata</taxon>
        <taxon>Euteleostomi</taxon>
        <taxon>Actinopterygii</taxon>
        <taxon>Neopterygii</taxon>
        <taxon>Teleostei</taxon>
        <taxon>Ostariophysi</taxon>
        <taxon>Cypriniformes</taxon>
        <taxon>Danionidae</taxon>
        <taxon>Danioninae</taxon>
        <taxon>Danio</taxon>
    </lineage>
</organism>
<keyword id="KW-0221">Differentiation</keyword>
<keyword id="KW-0238">DNA-binding</keyword>
<keyword id="KW-0539">Nucleus</keyword>
<keyword id="KW-1185">Reference proteome</keyword>
<keyword id="KW-0804">Transcription</keyword>
<keyword id="KW-0805">Transcription regulation</keyword>
<gene>
    <name evidence="6 11" type="primary">tcf21</name>
</gene>
<name>TCF21_DANRE</name>
<evidence type="ECO:0000250" key="1">
    <source>
        <dbReference type="UniProtKB" id="O43680"/>
    </source>
</evidence>
<evidence type="ECO:0000255" key="2">
    <source>
        <dbReference type="PROSITE-ProRule" id="PRU00981"/>
    </source>
</evidence>
<evidence type="ECO:0000256" key="3">
    <source>
        <dbReference type="SAM" id="MobiDB-lite"/>
    </source>
</evidence>
<evidence type="ECO:0000269" key="4">
    <source>
    </source>
</evidence>
<evidence type="ECO:0000269" key="5">
    <source>
    </source>
</evidence>
<evidence type="ECO:0000303" key="6">
    <source>
    </source>
</evidence>
<evidence type="ECO:0000303" key="7">
    <source>
    </source>
</evidence>
<evidence type="ECO:0000305" key="8"/>
<evidence type="ECO:0000312" key="9">
    <source>
        <dbReference type="EMBL" id="AAI07969.1"/>
    </source>
</evidence>
<evidence type="ECO:0000312" key="10">
    <source>
        <dbReference type="EMBL" id="ABU95406.1"/>
    </source>
</evidence>
<evidence type="ECO:0000312" key="11">
    <source>
        <dbReference type="ZFIN" id="ZDB-GENE-051113-88"/>
    </source>
</evidence>
<protein>
    <recommendedName>
        <fullName evidence="9">Transcription factor 21</fullName>
        <shortName>TCF-21</shortName>
    </recommendedName>
    <alternativeName>
        <fullName evidence="10">Capsulin</fullName>
    </alternativeName>
    <alternativeName>
        <fullName evidence="6">Epicardin</fullName>
    </alternativeName>
    <alternativeName>
        <fullName evidence="7">MyoRa2</fullName>
    </alternativeName>
</protein>
<comment type="function">
    <text evidence="1">Involved in epithelial-mesenchymal interactions in kidney and lung morphogenesis that include epithelial differentiation and branching morphogenesis.</text>
</comment>
<comment type="subunit">
    <text evidence="1">Efficient DNA binding requires dimerization with another bHLH protein.</text>
</comment>
<comment type="subcellular location">
    <subcellularLocation>
        <location evidence="1 2">Nucleus</location>
    </subcellularLocation>
</comment>
<comment type="tissue specificity">
    <text evidence="4 5">Expressed in the cranial paraxial mesoderm from 20 hpf and subsequently becomes restricted to the pharyngeal mesoderm that will form the muscle. Expression in the proepicardial organ is first seen at 40hpf in a cluster of cells between the myocardium and yolk. Also expressed in the developing arches. Expression begins to surround the heart by day 3 of development, and by 96 hpf, expression is restricted to the outer epicardial layer surrounding the myocardium.</text>
</comment>
<dbReference type="EMBL" id="EF632300">
    <property type="protein sequence ID" value="ABU95406.1"/>
    <property type="molecule type" value="mRNA"/>
</dbReference>
<dbReference type="EMBL" id="BC107968">
    <property type="protein sequence ID" value="AAI07969.1"/>
    <property type="molecule type" value="mRNA"/>
</dbReference>
<dbReference type="RefSeq" id="NP_001032770.1">
    <property type="nucleotide sequence ID" value="NM_001037681.1"/>
</dbReference>
<dbReference type="SMR" id="Q32PV5"/>
<dbReference type="FunCoup" id="Q32PV5">
    <property type="interactions" value="332"/>
</dbReference>
<dbReference type="STRING" id="7955.ENSDARP00000053538"/>
<dbReference type="PaxDb" id="7955-ENSDARP00000053538"/>
<dbReference type="GeneID" id="558148"/>
<dbReference type="KEGG" id="dre:558148"/>
<dbReference type="AGR" id="ZFIN:ZDB-GENE-051113-88"/>
<dbReference type="CTD" id="6943"/>
<dbReference type="ZFIN" id="ZDB-GENE-051113-88">
    <property type="gene designation" value="tcf21"/>
</dbReference>
<dbReference type="eggNOG" id="KOG4029">
    <property type="taxonomic scope" value="Eukaryota"/>
</dbReference>
<dbReference type="InParanoid" id="Q32PV5"/>
<dbReference type="OrthoDB" id="6233288at2759"/>
<dbReference type="PhylomeDB" id="Q32PV5"/>
<dbReference type="PRO" id="PR:Q32PV5"/>
<dbReference type="Proteomes" id="UP000000437">
    <property type="component" value="Alternate scaffold 23"/>
</dbReference>
<dbReference type="Proteomes" id="UP000000437">
    <property type="component" value="Chromosome 23"/>
</dbReference>
<dbReference type="GO" id="GO:0005634">
    <property type="term" value="C:nucleus"/>
    <property type="evidence" value="ECO:0000314"/>
    <property type="project" value="UniProtKB"/>
</dbReference>
<dbReference type="GO" id="GO:0001228">
    <property type="term" value="F:DNA-binding transcription activator activity, RNA polymerase II-specific"/>
    <property type="evidence" value="ECO:0000250"/>
    <property type="project" value="UniProtKB"/>
</dbReference>
<dbReference type="GO" id="GO:0000981">
    <property type="term" value="F:DNA-binding transcription factor activity, RNA polymerase II-specific"/>
    <property type="evidence" value="ECO:0000318"/>
    <property type="project" value="GO_Central"/>
</dbReference>
<dbReference type="GO" id="GO:0001227">
    <property type="term" value="F:DNA-binding transcription repressor activity, RNA polymerase II-specific"/>
    <property type="evidence" value="ECO:0000250"/>
    <property type="project" value="UniProtKB"/>
</dbReference>
<dbReference type="GO" id="GO:0070888">
    <property type="term" value="F:E-box binding"/>
    <property type="evidence" value="ECO:0000250"/>
    <property type="project" value="UniProtKB"/>
</dbReference>
<dbReference type="GO" id="GO:0046983">
    <property type="term" value="F:protein dimerization activity"/>
    <property type="evidence" value="ECO:0000250"/>
    <property type="project" value="UniProtKB"/>
</dbReference>
<dbReference type="GO" id="GO:0000977">
    <property type="term" value="F:RNA polymerase II transcription regulatory region sequence-specific DNA binding"/>
    <property type="evidence" value="ECO:0000318"/>
    <property type="project" value="GO_Central"/>
</dbReference>
<dbReference type="GO" id="GO:0060840">
    <property type="term" value="P:artery development"/>
    <property type="evidence" value="ECO:0000316"/>
    <property type="project" value="ZFIN"/>
</dbReference>
<dbReference type="GO" id="GO:0001658">
    <property type="term" value="P:branching involved in ureteric bud morphogenesis"/>
    <property type="evidence" value="ECO:0000250"/>
    <property type="project" value="UniProtKB"/>
</dbReference>
<dbReference type="GO" id="GO:0014707">
    <property type="term" value="P:branchiomeric skeletal muscle development"/>
    <property type="evidence" value="ECO:0000315"/>
    <property type="project" value="ZFIN"/>
</dbReference>
<dbReference type="GO" id="GO:0060435">
    <property type="term" value="P:bronchiole development"/>
    <property type="evidence" value="ECO:0000250"/>
    <property type="project" value="UniProtKB"/>
</dbReference>
<dbReference type="GO" id="GO:0032502">
    <property type="term" value="P:developmental process"/>
    <property type="evidence" value="ECO:0000318"/>
    <property type="project" value="GO_Central"/>
</dbReference>
<dbReference type="GO" id="GO:0060539">
    <property type="term" value="P:diaphragm development"/>
    <property type="evidence" value="ECO:0000250"/>
    <property type="project" value="UniProtKB"/>
</dbReference>
<dbReference type="GO" id="GO:0048557">
    <property type="term" value="P:embryonic digestive tract morphogenesis"/>
    <property type="evidence" value="ECO:0000250"/>
    <property type="project" value="UniProtKB"/>
</dbReference>
<dbReference type="GO" id="GO:0030855">
    <property type="term" value="P:epithelial cell differentiation"/>
    <property type="evidence" value="ECO:0000250"/>
    <property type="project" value="UniProtKB"/>
</dbReference>
<dbReference type="GO" id="GO:0048732">
    <property type="term" value="P:gland development"/>
    <property type="evidence" value="ECO:0000250"/>
    <property type="project" value="UniProtKB"/>
</dbReference>
<dbReference type="GO" id="GO:0032835">
    <property type="term" value="P:glomerulus development"/>
    <property type="evidence" value="ECO:0000250"/>
    <property type="project" value="UniProtKB"/>
</dbReference>
<dbReference type="GO" id="GO:0001822">
    <property type="term" value="P:kidney development"/>
    <property type="evidence" value="ECO:0000250"/>
    <property type="project" value="UniProtKB"/>
</dbReference>
<dbReference type="GO" id="GO:0048286">
    <property type="term" value="P:lung alveolus development"/>
    <property type="evidence" value="ECO:0000250"/>
    <property type="project" value="UniProtKB"/>
</dbReference>
<dbReference type="GO" id="GO:0060425">
    <property type="term" value="P:lung morphogenesis"/>
    <property type="evidence" value="ECO:0000250"/>
    <property type="project" value="UniProtKB"/>
</dbReference>
<dbReference type="GO" id="GO:0060426">
    <property type="term" value="P:lung vasculature development"/>
    <property type="evidence" value="ECO:0000250"/>
    <property type="project" value="UniProtKB"/>
</dbReference>
<dbReference type="GO" id="GO:0072277">
    <property type="term" value="P:metanephric glomerular capillary formation"/>
    <property type="evidence" value="ECO:0000250"/>
    <property type="project" value="UniProtKB"/>
</dbReference>
<dbReference type="GO" id="GO:0072162">
    <property type="term" value="P:metanephric mesenchymal cell differentiation"/>
    <property type="evidence" value="ECO:0000250"/>
    <property type="project" value="UniProtKB"/>
</dbReference>
<dbReference type="GO" id="GO:0001763">
    <property type="term" value="P:morphogenesis of a branching structure"/>
    <property type="evidence" value="ECO:0000250"/>
    <property type="project" value="UniProtKB"/>
</dbReference>
<dbReference type="GO" id="GO:0060766">
    <property type="term" value="P:negative regulation of androgen receptor signaling pathway"/>
    <property type="evidence" value="ECO:0000250"/>
    <property type="project" value="UniProtKB"/>
</dbReference>
<dbReference type="GO" id="GO:0000122">
    <property type="term" value="P:negative regulation of transcription by RNA polymerase II"/>
    <property type="evidence" value="ECO:0000250"/>
    <property type="project" value="UniProtKB"/>
</dbReference>
<dbReference type="GO" id="GO:0045944">
    <property type="term" value="P:positive regulation of transcription by RNA polymerase II"/>
    <property type="evidence" value="ECO:0000250"/>
    <property type="project" value="UniProtKB"/>
</dbReference>
<dbReference type="GO" id="GO:0006357">
    <property type="term" value="P:regulation of transcription by RNA polymerase II"/>
    <property type="evidence" value="ECO:0000318"/>
    <property type="project" value="GO_Central"/>
</dbReference>
<dbReference type="GO" id="GO:0048608">
    <property type="term" value="P:reproductive structure development"/>
    <property type="evidence" value="ECO:0000250"/>
    <property type="project" value="UniProtKB"/>
</dbReference>
<dbReference type="GO" id="GO:0060541">
    <property type="term" value="P:respiratory system development"/>
    <property type="evidence" value="ECO:0000250"/>
    <property type="project" value="UniProtKB"/>
</dbReference>
<dbReference type="GO" id="GO:0060021">
    <property type="term" value="P:roof of mouth development"/>
    <property type="evidence" value="ECO:0000250"/>
    <property type="project" value="UniProtKB"/>
</dbReference>
<dbReference type="GO" id="GO:0060008">
    <property type="term" value="P:Sertoli cell differentiation"/>
    <property type="evidence" value="ECO:0000250"/>
    <property type="project" value="UniProtKB"/>
</dbReference>
<dbReference type="GO" id="GO:0007530">
    <property type="term" value="P:sex determination"/>
    <property type="evidence" value="ECO:0000250"/>
    <property type="project" value="UniProtKB"/>
</dbReference>
<dbReference type="GO" id="GO:0007519">
    <property type="term" value="P:skeletal muscle tissue development"/>
    <property type="evidence" value="ECO:0000315"/>
    <property type="project" value="ZFIN"/>
</dbReference>
<dbReference type="GO" id="GO:0048536">
    <property type="term" value="P:spleen development"/>
    <property type="evidence" value="ECO:0000250"/>
    <property type="project" value="UniProtKB"/>
</dbReference>
<dbReference type="GO" id="GO:0001657">
    <property type="term" value="P:ureteric bud development"/>
    <property type="evidence" value="ECO:0000250"/>
    <property type="project" value="UniProtKB"/>
</dbReference>
<dbReference type="GO" id="GO:0001944">
    <property type="term" value="P:vasculature development"/>
    <property type="evidence" value="ECO:0000250"/>
    <property type="project" value="UniProtKB"/>
</dbReference>
<dbReference type="CDD" id="cd19704">
    <property type="entry name" value="bHLH_TS_TCF21_capsulin"/>
    <property type="match status" value="1"/>
</dbReference>
<dbReference type="FunFam" id="4.10.280.10:FF:000010">
    <property type="entry name" value="Scleraxis bHLH transcription factor"/>
    <property type="match status" value="1"/>
</dbReference>
<dbReference type="Gene3D" id="4.10.280.10">
    <property type="entry name" value="Helix-loop-helix DNA-binding domain"/>
    <property type="match status" value="1"/>
</dbReference>
<dbReference type="InterPro" id="IPR011598">
    <property type="entry name" value="bHLH_dom"/>
</dbReference>
<dbReference type="InterPro" id="IPR050283">
    <property type="entry name" value="E-box_TF_Regulators"/>
</dbReference>
<dbReference type="InterPro" id="IPR036638">
    <property type="entry name" value="HLH_DNA-bd_sf"/>
</dbReference>
<dbReference type="PANTHER" id="PTHR23349">
    <property type="entry name" value="BASIC HELIX-LOOP-HELIX TRANSCRIPTION FACTOR, TWIST"/>
    <property type="match status" value="1"/>
</dbReference>
<dbReference type="PANTHER" id="PTHR23349:SF67">
    <property type="entry name" value="TRANSCRIPTION FACTOR 21"/>
    <property type="match status" value="1"/>
</dbReference>
<dbReference type="Pfam" id="PF00010">
    <property type="entry name" value="HLH"/>
    <property type="match status" value="1"/>
</dbReference>
<dbReference type="SMART" id="SM00353">
    <property type="entry name" value="HLH"/>
    <property type="match status" value="1"/>
</dbReference>
<dbReference type="SUPFAM" id="SSF47459">
    <property type="entry name" value="HLH, helix-loop-helix DNA-binding domain"/>
    <property type="match status" value="1"/>
</dbReference>
<dbReference type="PROSITE" id="PS50888">
    <property type="entry name" value="BHLH"/>
    <property type="match status" value="1"/>
</dbReference>
<reference evidence="10" key="1">
    <citation type="submission" date="2007-05" db="EMBL/GenBank/DDBJ databases">
        <title>Molecular structure of zebrafish capsulin.</title>
        <authorList>
            <person name="Chang M.-Y."/>
            <person name="Chen Y.-H."/>
        </authorList>
    </citation>
    <scope>NUCLEOTIDE SEQUENCE [MRNA]</scope>
</reference>
<reference evidence="10" key="2">
    <citation type="submission" date="2005-10" db="EMBL/GenBank/DDBJ databases">
        <authorList>
            <consortium name="NIH - Zebrafish Gene Collection (ZGC) project"/>
        </authorList>
    </citation>
    <scope>NUCLEOTIDE SEQUENCE [LARGE SCALE MRNA]</scope>
    <source>
        <tissue evidence="9">Heart</tissue>
    </source>
</reference>
<reference evidence="8" key="3">
    <citation type="journal article" date="2008" name="Dev. Biol.">
        <title>Development of the proepicardial organ in the zebrafish.</title>
        <authorList>
            <person name="Serluca F.C."/>
        </authorList>
    </citation>
    <scope>TISSUE SPECIFICITY</scope>
</reference>
<reference evidence="8" key="4">
    <citation type="journal article" date="2008" name="J. Exp. Zool. B Mol. Dev. Evol.">
        <title>Mandibular arch muscle identity is regulated by a conserved molecular process during vertebrate development.</title>
        <authorList>
            <person name="Knight R.D."/>
            <person name="Mebus K."/>
            <person name="Roehl H.H."/>
        </authorList>
    </citation>
    <scope>TISSUE SPECIFICITY</scope>
</reference>
<reference evidence="8" key="5">
    <citation type="journal article" date="2009" name="J. Mol. Evol.">
        <title>Phylogenetic analysis of zebrafish basic helix-loop-helix transcription factors.</title>
        <authorList>
            <person name="Wang Y."/>
            <person name="Chen K."/>
            <person name="Yao Q."/>
            <person name="Zheng X."/>
            <person name="Yang Z."/>
        </authorList>
    </citation>
    <scope>IDENTIFICATION</scope>
</reference>
<proteinExistence type="evidence at transcript level"/>
<feature type="chain" id="PRO_0000386430" description="Transcription factor 21">
    <location>
        <begin position="1"/>
        <end position="176"/>
    </location>
</feature>
<feature type="domain" description="bHLH" evidence="2">
    <location>
        <begin position="76"/>
        <end position="128"/>
    </location>
</feature>
<feature type="region of interest" description="Disordered" evidence="3">
    <location>
        <begin position="1"/>
        <end position="84"/>
    </location>
</feature>
<feature type="compositionally biased region" description="Polar residues" evidence="3">
    <location>
        <begin position="31"/>
        <end position="44"/>
    </location>
</feature>